<keyword id="KW-0963">Cytoplasm</keyword>
<keyword id="KW-0449">Lipoprotein</keyword>
<keyword id="KW-0472">Membrane</keyword>
<keyword id="KW-0519">Myristate</keyword>
<keyword id="KW-1185">Reference proteome</keyword>
<name>PCMD1_MOUSE</name>
<accession>P59913</accession>
<sequence>MGGAVSAGEDNDDLIDNLKEAQYIRTERVEQAFRAIDRGDYYLEGYRDNAYKDLAWKHGNIHLSAPCIYSEVMEALKLQPGLSFLNLGSGTGYLSTMVGLILGPFGINHGIELHSDVVEYAKEKLESFIKNSDSFDKFEFCEPAFVVGNCLQIASDSHQYDRIYCGAGVQKDHENYMKILLKVGGILVMPIEDQLTQIMRTGQNTWESKNILAVSFAPLVQPSKNDNGTPDSVGLPPCAVRNLQDLARIYIRRTLRNFINDEMQAKGIPQRAPPKRKRKRVKQRINTYVFVGNQLIPQPLDSEEDEKMEEDSKEEEEKEHIEAMKREEPPQNLLREKIMKLPLPESLKAYLTYFRDK</sequence>
<reference key="1">
    <citation type="journal article" date="2004" name="Genome Res.">
        <title>The status, quality, and expansion of the NIH full-length cDNA project: the Mammalian Gene Collection (MGC).</title>
        <authorList>
            <consortium name="The MGC Project Team"/>
        </authorList>
    </citation>
    <scope>NUCLEOTIDE SEQUENCE [LARGE SCALE MRNA]</scope>
    <source>
        <strain>C57BL/6J</strain>
        <tissue>Brain</tissue>
    </source>
</reference>
<reference key="2">
    <citation type="journal article" date="2010" name="Cell">
        <title>A tissue-specific atlas of mouse protein phosphorylation and expression.</title>
        <authorList>
            <person name="Huttlin E.L."/>
            <person name="Jedrychowski M.P."/>
            <person name="Elias J.E."/>
            <person name="Goswami T."/>
            <person name="Rad R."/>
            <person name="Beausoleil S.A."/>
            <person name="Villen J."/>
            <person name="Haas W."/>
            <person name="Sowa M.E."/>
            <person name="Gygi S.P."/>
        </authorList>
    </citation>
    <scope>IDENTIFICATION BY MASS SPECTROMETRY [LARGE SCALE ANALYSIS]</scope>
    <source>
        <tissue>Liver</tissue>
    </source>
</reference>
<dbReference type="EMBL" id="BC052741">
    <property type="protein sequence ID" value="AAH52741.1"/>
    <property type="molecule type" value="mRNA"/>
</dbReference>
<dbReference type="CCDS" id="CCDS35508.1"/>
<dbReference type="RefSeq" id="NP_898849.1">
    <property type="nucleotide sequence ID" value="NM_183028.3"/>
</dbReference>
<dbReference type="SMR" id="P59913"/>
<dbReference type="BioGRID" id="235163">
    <property type="interactions" value="7"/>
</dbReference>
<dbReference type="FunCoup" id="P59913">
    <property type="interactions" value="510"/>
</dbReference>
<dbReference type="IntAct" id="P59913">
    <property type="interactions" value="3"/>
</dbReference>
<dbReference type="STRING" id="10090.ENSMUSP00000059261"/>
<dbReference type="iPTMnet" id="P59913"/>
<dbReference type="PhosphoSitePlus" id="P59913"/>
<dbReference type="SwissPalm" id="P59913"/>
<dbReference type="jPOST" id="P59913"/>
<dbReference type="PaxDb" id="10090-ENSMUSP00000059261"/>
<dbReference type="PeptideAtlas" id="P59913"/>
<dbReference type="ProteomicsDB" id="301774"/>
<dbReference type="Pumba" id="P59913"/>
<dbReference type="Antibodypedia" id="11598">
    <property type="antibodies" value="95 antibodies from 16 providers"/>
</dbReference>
<dbReference type="Ensembl" id="ENSMUST00000061280.17">
    <property type="protein sequence ID" value="ENSMUSP00000059261.10"/>
    <property type="gene ID" value="ENSMUSG00000051285.18"/>
</dbReference>
<dbReference type="GeneID" id="319263"/>
<dbReference type="KEGG" id="mmu:319263"/>
<dbReference type="UCSC" id="uc007agb.1">
    <property type="organism name" value="mouse"/>
</dbReference>
<dbReference type="AGR" id="MGI:2441773"/>
<dbReference type="CTD" id="115294"/>
<dbReference type="MGI" id="MGI:2441773">
    <property type="gene designation" value="Pcmtd1"/>
</dbReference>
<dbReference type="VEuPathDB" id="HostDB:ENSMUSG00000051285"/>
<dbReference type="eggNOG" id="KOG1661">
    <property type="taxonomic scope" value="Eukaryota"/>
</dbReference>
<dbReference type="GeneTree" id="ENSGT00950000183032"/>
<dbReference type="HOGENOM" id="CLU_029295_0_0_1"/>
<dbReference type="InParanoid" id="P59913"/>
<dbReference type="OMA" id="QSTWDSR"/>
<dbReference type="OrthoDB" id="10257972at2759"/>
<dbReference type="PhylomeDB" id="P59913"/>
<dbReference type="TreeFam" id="TF329329"/>
<dbReference type="BioGRID-ORCS" id="319263">
    <property type="hits" value="1 hit in 76 CRISPR screens"/>
</dbReference>
<dbReference type="ChiTaRS" id="Pcmtd1">
    <property type="organism name" value="mouse"/>
</dbReference>
<dbReference type="PRO" id="PR:P59913"/>
<dbReference type="Proteomes" id="UP000000589">
    <property type="component" value="Chromosome 1"/>
</dbReference>
<dbReference type="RNAct" id="P59913">
    <property type="molecule type" value="protein"/>
</dbReference>
<dbReference type="Bgee" id="ENSMUSG00000051285">
    <property type="expression patterns" value="Expressed in parotid gland and 258 other cell types or tissues"/>
</dbReference>
<dbReference type="ExpressionAtlas" id="P59913">
    <property type="expression patterns" value="baseline and differential"/>
</dbReference>
<dbReference type="GO" id="GO:0031466">
    <property type="term" value="C:Cul5-RING ubiquitin ligase complex"/>
    <property type="evidence" value="ECO:0000250"/>
    <property type="project" value="UniProtKB"/>
</dbReference>
<dbReference type="GO" id="GO:0005737">
    <property type="term" value="C:cytoplasm"/>
    <property type="evidence" value="ECO:0007669"/>
    <property type="project" value="UniProtKB-SubCell"/>
</dbReference>
<dbReference type="GO" id="GO:0016020">
    <property type="term" value="C:membrane"/>
    <property type="evidence" value="ECO:0007669"/>
    <property type="project" value="UniProtKB-SubCell"/>
</dbReference>
<dbReference type="GO" id="GO:1990756">
    <property type="term" value="F:ubiquitin-like ligase-substrate adaptor activity"/>
    <property type="evidence" value="ECO:0000250"/>
    <property type="project" value="UniProtKB"/>
</dbReference>
<dbReference type="GO" id="GO:0016567">
    <property type="term" value="P:protein ubiquitination"/>
    <property type="evidence" value="ECO:0000250"/>
    <property type="project" value="UniProtKB"/>
</dbReference>
<dbReference type="FunFam" id="3.40.50.150:FF:000015">
    <property type="entry name" value="Protein-L-isoaspartate (D-aspartate) O-methyltransferase domain-containing 1"/>
    <property type="match status" value="1"/>
</dbReference>
<dbReference type="Gene3D" id="3.40.50.150">
    <property type="entry name" value="Vaccinia Virus protein VP39"/>
    <property type="match status" value="1"/>
</dbReference>
<dbReference type="InterPro" id="IPR000682">
    <property type="entry name" value="PCMT"/>
</dbReference>
<dbReference type="InterPro" id="IPR029063">
    <property type="entry name" value="SAM-dependent_MTases_sf"/>
</dbReference>
<dbReference type="PANTHER" id="PTHR11579">
    <property type="entry name" value="PROTEIN-L-ISOASPARTATE O-METHYLTRANSFERASE"/>
    <property type="match status" value="1"/>
</dbReference>
<dbReference type="PANTHER" id="PTHR11579:SF4">
    <property type="entry name" value="PROTEIN-L-ISOASPARTATE O-METHYLTRANSFERASE DOMAIN-CONTAINING PROTEIN 1"/>
    <property type="match status" value="1"/>
</dbReference>
<dbReference type="Pfam" id="PF01135">
    <property type="entry name" value="PCMT"/>
    <property type="match status" value="1"/>
</dbReference>
<dbReference type="SUPFAM" id="SSF53335">
    <property type="entry name" value="S-adenosyl-L-methionine-dependent methyltransferases"/>
    <property type="match status" value="1"/>
</dbReference>
<proteinExistence type="evidence at protein level"/>
<protein>
    <recommendedName>
        <fullName>Protein-L-isoaspartate O-methyltransferase domain-containing protein 1</fullName>
    </recommendedName>
</protein>
<evidence type="ECO:0000250" key="1">
    <source>
        <dbReference type="UniProtKB" id="P22061"/>
    </source>
</evidence>
<evidence type="ECO:0000250" key="2">
    <source>
        <dbReference type="UniProtKB" id="Q27869"/>
    </source>
</evidence>
<evidence type="ECO:0000250" key="3">
    <source>
        <dbReference type="UniProtKB" id="Q96MG8"/>
    </source>
</evidence>
<evidence type="ECO:0000256" key="4">
    <source>
        <dbReference type="SAM" id="MobiDB-lite"/>
    </source>
</evidence>
<evidence type="ECO:0000305" key="5"/>
<feature type="initiator methionine" description="Removed" evidence="3">
    <location>
        <position position="1"/>
    </location>
</feature>
<feature type="chain" id="PRO_0000111926" description="Protein-L-isoaspartate O-methyltransferase domain-containing protein 1">
    <location>
        <begin position="2"/>
        <end position="357"/>
    </location>
</feature>
<feature type="region of interest" description="AdoMet binding motif" evidence="3">
    <location>
        <begin position="85"/>
        <end position="94"/>
    </location>
</feature>
<feature type="region of interest" description="AdoMet binding motif" evidence="3">
    <location>
        <begin position="160"/>
        <end position="164"/>
    </location>
</feature>
<feature type="region of interest" description="AdoMet binding motif" evidence="3">
    <location>
        <begin position="181"/>
        <end position="191"/>
    </location>
</feature>
<feature type="region of interest" description="BC-box" evidence="3">
    <location>
        <begin position="240"/>
        <end position="250"/>
    </location>
</feature>
<feature type="region of interest" description="Disordered" evidence="4">
    <location>
        <begin position="299"/>
        <end position="331"/>
    </location>
</feature>
<feature type="region of interest" description="CUL-box" evidence="3">
    <location>
        <begin position="341"/>
        <end position="344"/>
    </location>
</feature>
<feature type="compositionally biased region" description="Acidic residues" evidence="4">
    <location>
        <begin position="301"/>
        <end position="317"/>
    </location>
</feature>
<feature type="compositionally biased region" description="Basic and acidic residues" evidence="4">
    <location>
        <begin position="318"/>
        <end position="331"/>
    </location>
</feature>
<feature type="active site" evidence="2">
    <location>
        <position position="64"/>
    </location>
</feature>
<feature type="lipid moiety-binding region" description="N-myristoyl glycine" evidence="3">
    <location>
        <position position="2"/>
    </location>
</feature>
<comment type="function">
    <text evidence="3">Substrate recognition component of an ECS (Elongin BC-CUL5-SOCS-box protein) E3 ubiquitin ligase complex which mediates the ubiquitination and subsequent proteasomal degradation of target proteins. Specifically binds to the methyltransferase cofactor S-adenosylmethionine (AdoMet) via the N-terminal AdoMet binding motif, but does not display methyltransferase activity. May provide an alternate maintenance pathway for modified proteins by acting as a damage-specific E3 ubiquitin ligase adaptor protein.</text>
</comment>
<comment type="subunit">
    <text evidence="3">Component of the probable ECS(PCMTD1) E3 ubiquitin-protein ligase complex, at least composed of CUL5, ELOB, ELOC, RBX2 and PCMTD1. Interacts (via the BC-box) with ELOB and ELOC; the interaction is direct and stabilizes PCMTD1.</text>
</comment>
<comment type="subcellular location">
    <subcellularLocation>
        <location evidence="1">Cytoplasm</location>
    </subcellularLocation>
    <subcellularLocation>
        <location evidence="3">Membrane</location>
        <topology evidence="3">Lipid-anchor</topology>
    </subcellularLocation>
</comment>
<comment type="domain">
    <text evidence="3">At its N-terminus, contains L-isoaspartate and S-adenosylmethionine (AdoMet) binding motifs. Also contains an extended SOCS box motif, where the Cul-box is separated from the BC-box by ~90 residues, within its C-terminus.</text>
</comment>
<comment type="similarity">
    <text evidence="5">Belongs to the methyltransferase superfamily. L-isoaspartyl/D-aspartyl protein methyltransferase family.</text>
</comment>
<comment type="caution">
    <text evidence="3">Although the active site residue Ser is conserved, appears to lack catalytic activity in vitro.</text>
</comment>
<gene>
    <name type="primary">Pcmtd1</name>
</gene>
<organism>
    <name type="scientific">Mus musculus</name>
    <name type="common">Mouse</name>
    <dbReference type="NCBI Taxonomy" id="10090"/>
    <lineage>
        <taxon>Eukaryota</taxon>
        <taxon>Metazoa</taxon>
        <taxon>Chordata</taxon>
        <taxon>Craniata</taxon>
        <taxon>Vertebrata</taxon>
        <taxon>Euteleostomi</taxon>
        <taxon>Mammalia</taxon>
        <taxon>Eutheria</taxon>
        <taxon>Euarchontoglires</taxon>
        <taxon>Glires</taxon>
        <taxon>Rodentia</taxon>
        <taxon>Myomorpha</taxon>
        <taxon>Muroidea</taxon>
        <taxon>Muridae</taxon>
        <taxon>Murinae</taxon>
        <taxon>Mus</taxon>
        <taxon>Mus</taxon>
    </lineage>
</organism>